<keyword id="KW-0963">Cytoplasm</keyword>
<keyword id="KW-0378">Hydrolase</keyword>
<keyword id="KW-0540">Nuclease</keyword>
<keyword id="KW-0690">Ribosome biogenesis</keyword>
<dbReference type="EC" id="3.1.-.-" evidence="1"/>
<dbReference type="EMBL" id="CP000551">
    <property type="protein sequence ID" value="ABM70139.1"/>
    <property type="molecule type" value="Genomic_DNA"/>
</dbReference>
<dbReference type="RefSeq" id="WP_011818297.1">
    <property type="nucleotide sequence ID" value="NC_008816.1"/>
</dbReference>
<dbReference type="SMR" id="A2BQS8"/>
<dbReference type="STRING" id="146891.A9601_08551"/>
<dbReference type="KEGG" id="pmb:A9601_08551"/>
<dbReference type="eggNOG" id="COG0816">
    <property type="taxonomic scope" value="Bacteria"/>
</dbReference>
<dbReference type="HOGENOM" id="CLU_098240_3_1_3"/>
<dbReference type="OrthoDB" id="9796140at2"/>
<dbReference type="Proteomes" id="UP000002590">
    <property type="component" value="Chromosome"/>
</dbReference>
<dbReference type="GO" id="GO:0005829">
    <property type="term" value="C:cytosol"/>
    <property type="evidence" value="ECO:0007669"/>
    <property type="project" value="TreeGrafter"/>
</dbReference>
<dbReference type="GO" id="GO:0004518">
    <property type="term" value="F:nuclease activity"/>
    <property type="evidence" value="ECO:0007669"/>
    <property type="project" value="UniProtKB-KW"/>
</dbReference>
<dbReference type="GO" id="GO:0000967">
    <property type="term" value="P:rRNA 5'-end processing"/>
    <property type="evidence" value="ECO:0007669"/>
    <property type="project" value="UniProtKB-UniRule"/>
</dbReference>
<dbReference type="CDD" id="cd16964">
    <property type="entry name" value="YqgF"/>
    <property type="match status" value="1"/>
</dbReference>
<dbReference type="Gene3D" id="3.30.420.140">
    <property type="entry name" value="YqgF/RNase H-like domain"/>
    <property type="match status" value="1"/>
</dbReference>
<dbReference type="HAMAP" id="MF_00651">
    <property type="entry name" value="Nuclease_YqgF"/>
    <property type="match status" value="1"/>
</dbReference>
<dbReference type="InterPro" id="IPR012337">
    <property type="entry name" value="RNaseH-like_sf"/>
</dbReference>
<dbReference type="InterPro" id="IPR005227">
    <property type="entry name" value="YqgF"/>
</dbReference>
<dbReference type="InterPro" id="IPR006641">
    <property type="entry name" value="YqgF/RNaseH-like_dom"/>
</dbReference>
<dbReference type="InterPro" id="IPR037027">
    <property type="entry name" value="YqgF/RNaseH-like_dom_sf"/>
</dbReference>
<dbReference type="NCBIfam" id="TIGR00250">
    <property type="entry name" value="RNAse_H_YqgF"/>
    <property type="match status" value="1"/>
</dbReference>
<dbReference type="PANTHER" id="PTHR33317">
    <property type="entry name" value="POLYNUCLEOTIDYL TRANSFERASE, RIBONUCLEASE H-LIKE SUPERFAMILY PROTEIN"/>
    <property type="match status" value="1"/>
</dbReference>
<dbReference type="PANTHER" id="PTHR33317:SF4">
    <property type="entry name" value="POLYNUCLEOTIDYL TRANSFERASE, RIBONUCLEASE H-LIKE SUPERFAMILY PROTEIN"/>
    <property type="match status" value="1"/>
</dbReference>
<dbReference type="Pfam" id="PF03652">
    <property type="entry name" value="RuvX"/>
    <property type="match status" value="1"/>
</dbReference>
<dbReference type="SMART" id="SM00732">
    <property type="entry name" value="YqgFc"/>
    <property type="match status" value="1"/>
</dbReference>
<dbReference type="SUPFAM" id="SSF53098">
    <property type="entry name" value="Ribonuclease H-like"/>
    <property type="match status" value="1"/>
</dbReference>
<organism>
    <name type="scientific">Prochlorococcus marinus (strain AS9601)</name>
    <dbReference type="NCBI Taxonomy" id="146891"/>
    <lineage>
        <taxon>Bacteria</taxon>
        <taxon>Bacillati</taxon>
        <taxon>Cyanobacteriota</taxon>
        <taxon>Cyanophyceae</taxon>
        <taxon>Synechococcales</taxon>
        <taxon>Prochlorococcaceae</taxon>
        <taxon>Prochlorococcus</taxon>
    </lineage>
</organism>
<sequence>MKFCKPKPKSILSLDIGTKRIGLAYCDPLCITSNILPAVKRFENNQEIKIIRNYINEFNLTGFIVGIPLDEKGKMTTQAIDCKNYGQLLSNELKLPFSYVNEHSSTWESSERFGIKKDKSGLIDSFSAKIILEQWIEEGPELEEIAGKRQIKY</sequence>
<proteinExistence type="inferred from homology"/>
<protein>
    <recommendedName>
        <fullName evidence="1">Putative pre-16S rRNA nuclease</fullName>
        <ecNumber evidence="1">3.1.-.-</ecNumber>
    </recommendedName>
</protein>
<accession>A2BQS8</accession>
<gene>
    <name type="ordered locus">A9601_08551</name>
</gene>
<name>YQGF_PROMS</name>
<evidence type="ECO:0000255" key="1">
    <source>
        <dbReference type="HAMAP-Rule" id="MF_00651"/>
    </source>
</evidence>
<comment type="function">
    <text evidence="1">Could be a nuclease involved in processing of the 5'-end of pre-16S rRNA.</text>
</comment>
<comment type="subcellular location">
    <subcellularLocation>
        <location evidence="1">Cytoplasm</location>
    </subcellularLocation>
</comment>
<comment type="similarity">
    <text evidence="1">Belongs to the YqgF nuclease family.</text>
</comment>
<feature type="chain" id="PRO_1000061554" description="Putative pre-16S rRNA nuclease">
    <location>
        <begin position="1"/>
        <end position="153"/>
    </location>
</feature>
<reference key="1">
    <citation type="journal article" date="2007" name="PLoS Genet.">
        <title>Patterns and implications of gene gain and loss in the evolution of Prochlorococcus.</title>
        <authorList>
            <person name="Kettler G.C."/>
            <person name="Martiny A.C."/>
            <person name="Huang K."/>
            <person name="Zucker J."/>
            <person name="Coleman M.L."/>
            <person name="Rodrigue S."/>
            <person name="Chen F."/>
            <person name="Lapidus A."/>
            <person name="Ferriera S."/>
            <person name="Johnson J."/>
            <person name="Steglich C."/>
            <person name="Church G.M."/>
            <person name="Richardson P."/>
            <person name="Chisholm S.W."/>
        </authorList>
    </citation>
    <scope>NUCLEOTIDE SEQUENCE [LARGE SCALE GENOMIC DNA]</scope>
    <source>
        <strain>AS9601</strain>
    </source>
</reference>